<evidence type="ECO:0000250" key="1">
    <source>
        <dbReference type="UniProtKB" id="P14280"/>
    </source>
</evidence>
<evidence type="ECO:0000255" key="2"/>
<evidence type="ECO:0000305" key="3"/>
<reference evidence="3" key="1">
    <citation type="submission" date="2008-07" db="UniProtKB">
        <authorList>
            <person name="Almagro L."/>
            <person name="Sabater Jara A.B."/>
            <person name="Pedreno M.A."/>
        </authorList>
    </citation>
    <scope>PROTEIN SEQUENCE</scope>
</reference>
<accession>P86075</accession>
<feature type="chain" id="PRO_0000362163" description="Pectinesterase">
    <location>
        <begin position="1" status="less than"/>
        <end position="10" status="greater than"/>
    </location>
</feature>
<feature type="binding site" evidence="1">
    <location>
        <position position="8"/>
    </location>
    <ligand>
        <name>substrate</name>
    </ligand>
</feature>
<feature type="unsure residue" description="F or M">
    <location>
        <position position="9"/>
    </location>
</feature>
<feature type="non-terminal residue">
    <location>
        <position position="1"/>
    </location>
</feature>
<feature type="non-terminal residue">
    <location>
        <position position="10"/>
    </location>
</feature>
<proteinExistence type="evidence at protein level"/>
<organism>
    <name type="scientific">Capsicum annuum var. annuum</name>
    <name type="common">Red pepper</name>
    <dbReference type="NCBI Taxonomy" id="40321"/>
    <lineage>
        <taxon>Eukaryota</taxon>
        <taxon>Viridiplantae</taxon>
        <taxon>Streptophyta</taxon>
        <taxon>Embryophyta</taxon>
        <taxon>Tracheophyta</taxon>
        <taxon>Spermatophyta</taxon>
        <taxon>Magnoliopsida</taxon>
        <taxon>eudicotyledons</taxon>
        <taxon>Gunneridae</taxon>
        <taxon>Pentapetalae</taxon>
        <taxon>asterids</taxon>
        <taxon>lamiids</taxon>
        <taxon>Solanales</taxon>
        <taxon>Solanaceae</taxon>
        <taxon>Solanoideae</taxon>
        <taxon>Capsiceae</taxon>
        <taxon>Capsicum</taxon>
    </lineage>
</organism>
<sequence length="10" mass="1167">SVVDGWTTFR</sequence>
<name>PME_CAPAA</name>
<keyword id="KW-0063">Aspartyl esterase</keyword>
<keyword id="KW-0134">Cell wall</keyword>
<keyword id="KW-0961">Cell wall biogenesis/degradation</keyword>
<keyword id="KW-0903">Direct protein sequencing</keyword>
<keyword id="KW-0378">Hydrolase</keyword>
<keyword id="KW-0964">Secreted</keyword>
<dbReference type="EC" id="3.1.1.11"/>
<dbReference type="UniPathway" id="UPA00545">
    <property type="reaction ID" value="UER00823"/>
</dbReference>
<dbReference type="GO" id="GO:0005576">
    <property type="term" value="C:extracellular region"/>
    <property type="evidence" value="ECO:0007669"/>
    <property type="project" value="UniProtKB-KW"/>
</dbReference>
<dbReference type="GO" id="GO:0030599">
    <property type="term" value="F:pectinesterase activity"/>
    <property type="evidence" value="ECO:0007669"/>
    <property type="project" value="UniProtKB-EC"/>
</dbReference>
<dbReference type="GO" id="GO:0071555">
    <property type="term" value="P:cell wall organization"/>
    <property type="evidence" value="ECO:0007669"/>
    <property type="project" value="UniProtKB-KW"/>
</dbReference>
<dbReference type="GO" id="GO:0045490">
    <property type="term" value="P:pectin catabolic process"/>
    <property type="evidence" value="ECO:0007669"/>
    <property type="project" value="UniProtKB-UniPathway"/>
</dbReference>
<protein>
    <recommendedName>
        <fullName evidence="1">Pectinesterase</fullName>
        <shortName evidence="1">PE</shortName>
        <ecNumber>3.1.1.11</ecNumber>
    </recommendedName>
    <alternativeName>
        <fullName evidence="1">Pectin methylesterase</fullName>
    </alternativeName>
</protein>
<comment type="catalytic activity">
    <reaction evidence="1">
        <text>[(1-&gt;4)-alpha-D-galacturonosyl methyl ester](n) + n H2O = [(1-&gt;4)-alpha-D-galacturonosyl](n) + n methanol + n H(+)</text>
        <dbReference type="Rhea" id="RHEA:22380"/>
        <dbReference type="Rhea" id="RHEA-COMP:14570"/>
        <dbReference type="Rhea" id="RHEA-COMP:14573"/>
        <dbReference type="ChEBI" id="CHEBI:15377"/>
        <dbReference type="ChEBI" id="CHEBI:15378"/>
        <dbReference type="ChEBI" id="CHEBI:17790"/>
        <dbReference type="ChEBI" id="CHEBI:140522"/>
        <dbReference type="ChEBI" id="CHEBI:140523"/>
        <dbReference type="EC" id="3.1.1.11"/>
    </reaction>
</comment>
<comment type="pathway">
    <text>Glycan metabolism; pectin degradation; 2-dehydro-3-deoxy-D-gluconate from pectin: step 1/5.</text>
</comment>
<comment type="subcellular location">
    <subcellularLocation>
        <location evidence="1">Secreted</location>
        <location evidence="1">Cell wall</location>
    </subcellularLocation>
</comment>
<comment type="similarity">
    <text evidence="2">Belongs to the pectinesterase family.</text>
</comment>